<reference key="1">
    <citation type="journal article" date="1982" name="Hoppe-Seyler's Z. Physiol. Chem.">
        <title>The sequence of hemoglobins from an asiatic wild ass and a mountain zebra.</title>
        <authorList>
            <person name="Mazur G."/>
            <person name="Braunitzer G."/>
        </authorList>
    </citation>
    <scope>PROTEIN SEQUENCE</scope>
</reference>
<sequence length="146" mass="16079">VQLSGEEKAAVLALWDKVNEEEVGGEALGRLLVVYPWTQRFFDSFGDLSNPAAVMGNPKVKAHGKKVLHSFGEGVHHLDNLKGTFAQLSELHCDKLHVDPENFRLLGNVLVVVLARHFGKDFTPELQASYQKVVAGVANALAHKYH</sequence>
<keyword id="KW-0007">Acetylation</keyword>
<keyword id="KW-0903">Direct protein sequencing</keyword>
<keyword id="KW-0349">Heme</keyword>
<keyword id="KW-0408">Iron</keyword>
<keyword id="KW-0479">Metal-binding</keyword>
<keyword id="KW-0561">Oxygen transport</keyword>
<keyword id="KW-0597">Phosphoprotein</keyword>
<keyword id="KW-0702">S-nitrosylation</keyword>
<keyword id="KW-0813">Transport</keyword>
<comment type="function">
    <text>Involved in oxygen transport from the lung to the various peripheral tissues.</text>
</comment>
<comment type="subunit">
    <text>Heterotetramer of two alpha chains and two beta chains.</text>
</comment>
<comment type="tissue specificity">
    <text>Red blood cells.</text>
</comment>
<comment type="similarity">
    <text evidence="3">Belongs to the globin family.</text>
</comment>
<accession>P67824</accession>
<accession>P02063</accession>
<evidence type="ECO:0000250" key="1">
    <source>
        <dbReference type="UniProtKB" id="P02086"/>
    </source>
</evidence>
<evidence type="ECO:0000250" key="2">
    <source>
        <dbReference type="UniProtKB" id="P68871"/>
    </source>
</evidence>
<evidence type="ECO:0000255" key="3">
    <source>
        <dbReference type="PROSITE-ProRule" id="PRU00238"/>
    </source>
</evidence>
<protein>
    <recommendedName>
        <fullName>Hemoglobin subunit beta</fullName>
    </recommendedName>
    <alternativeName>
        <fullName>Beta-globin</fullName>
    </alternativeName>
    <alternativeName>
        <fullName>Hemoglobin beta chain</fullName>
    </alternativeName>
</protein>
<proteinExistence type="evidence at protein level"/>
<gene>
    <name type="primary">HBB</name>
</gene>
<dbReference type="PIR" id="A02381">
    <property type="entry name" value="HBHOZ"/>
</dbReference>
<dbReference type="SMR" id="P67824"/>
<dbReference type="GO" id="GO:0072562">
    <property type="term" value="C:blood microparticle"/>
    <property type="evidence" value="ECO:0007669"/>
    <property type="project" value="TreeGrafter"/>
</dbReference>
<dbReference type="GO" id="GO:0031838">
    <property type="term" value="C:haptoglobin-hemoglobin complex"/>
    <property type="evidence" value="ECO:0007669"/>
    <property type="project" value="TreeGrafter"/>
</dbReference>
<dbReference type="GO" id="GO:0005833">
    <property type="term" value="C:hemoglobin complex"/>
    <property type="evidence" value="ECO:0007669"/>
    <property type="project" value="InterPro"/>
</dbReference>
<dbReference type="GO" id="GO:0031720">
    <property type="term" value="F:haptoglobin binding"/>
    <property type="evidence" value="ECO:0007669"/>
    <property type="project" value="TreeGrafter"/>
</dbReference>
<dbReference type="GO" id="GO:0020037">
    <property type="term" value="F:heme binding"/>
    <property type="evidence" value="ECO:0007669"/>
    <property type="project" value="InterPro"/>
</dbReference>
<dbReference type="GO" id="GO:0031721">
    <property type="term" value="F:hemoglobin alpha binding"/>
    <property type="evidence" value="ECO:0007669"/>
    <property type="project" value="TreeGrafter"/>
</dbReference>
<dbReference type="GO" id="GO:0046872">
    <property type="term" value="F:metal ion binding"/>
    <property type="evidence" value="ECO:0007669"/>
    <property type="project" value="UniProtKB-KW"/>
</dbReference>
<dbReference type="GO" id="GO:0043177">
    <property type="term" value="F:organic acid binding"/>
    <property type="evidence" value="ECO:0007669"/>
    <property type="project" value="TreeGrafter"/>
</dbReference>
<dbReference type="GO" id="GO:0019825">
    <property type="term" value="F:oxygen binding"/>
    <property type="evidence" value="ECO:0007669"/>
    <property type="project" value="InterPro"/>
</dbReference>
<dbReference type="GO" id="GO:0005344">
    <property type="term" value="F:oxygen carrier activity"/>
    <property type="evidence" value="ECO:0007669"/>
    <property type="project" value="UniProtKB-KW"/>
</dbReference>
<dbReference type="GO" id="GO:0004601">
    <property type="term" value="F:peroxidase activity"/>
    <property type="evidence" value="ECO:0007669"/>
    <property type="project" value="TreeGrafter"/>
</dbReference>
<dbReference type="GO" id="GO:0042744">
    <property type="term" value="P:hydrogen peroxide catabolic process"/>
    <property type="evidence" value="ECO:0007669"/>
    <property type="project" value="TreeGrafter"/>
</dbReference>
<dbReference type="CDD" id="cd08925">
    <property type="entry name" value="Hb-beta-like"/>
    <property type="match status" value="1"/>
</dbReference>
<dbReference type="FunFam" id="1.10.490.10:FF:000001">
    <property type="entry name" value="Hemoglobin subunit beta"/>
    <property type="match status" value="1"/>
</dbReference>
<dbReference type="Gene3D" id="1.10.490.10">
    <property type="entry name" value="Globins"/>
    <property type="match status" value="1"/>
</dbReference>
<dbReference type="InterPro" id="IPR000971">
    <property type="entry name" value="Globin"/>
</dbReference>
<dbReference type="InterPro" id="IPR009050">
    <property type="entry name" value="Globin-like_sf"/>
</dbReference>
<dbReference type="InterPro" id="IPR012292">
    <property type="entry name" value="Globin/Proto"/>
</dbReference>
<dbReference type="InterPro" id="IPR002337">
    <property type="entry name" value="Hemoglobin_b"/>
</dbReference>
<dbReference type="InterPro" id="IPR050056">
    <property type="entry name" value="Hemoglobin_oxygen_transport"/>
</dbReference>
<dbReference type="PANTHER" id="PTHR11442">
    <property type="entry name" value="HEMOGLOBIN FAMILY MEMBER"/>
    <property type="match status" value="1"/>
</dbReference>
<dbReference type="PANTHER" id="PTHR11442:SF42">
    <property type="entry name" value="HEMOGLOBIN SUBUNIT BETA"/>
    <property type="match status" value="1"/>
</dbReference>
<dbReference type="Pfam" id="PF00042">
    <property type="entry name" value="Globin"/>
    <property type="match status" value="1"/>
</dbReference>
<dbReference type="PRINTS" id="PR00814">
    <property type="entry name" value="BETAHAEM"/>
</dbReference>
<dbReference type="SUPFAM" id="SSF46458">
    <property type="entry name" value="Globin-like"/>
    <property type="match status" value="1"/>
</dbReference>
<dbReference type="PROSITE" id="PS01033">
    <property type="entry name" value="GLOBIN"/>
    <property type="match status" value="1"/>
</dbReference>
<organism>
    <name type="scientific">Equus zebra</name>
    <name type="common">Mountain zebra</name>
    <dbReference type="NCBI Taxonomy" id="9791"/>
    <lineage>
        <taxon>Eukaryota</taxon>
        <taxon>Metazoa</taxon>
        <taxon>Chordata</taxon>
        <taxon>Craniata</taxon>
        <taxon>Vertebrata</taxon>
        <taxon>Euteleostomi</taxon>
        <taxon>Mammalia</taxon>
        <taxon>Eutheria</taxon>
        <taxon>Laurasiatheria</taxon>
        <taxon>Perissodactyla</taxon>
        <taxon>Equidae</taxon>
        <taxon>Equus</taxon>
    </lineage>
</organism>
<name>HBB_EQUZE</name>
<feature type="chain" id="PRO_0000052955" description="Hemoglobin subunit beta">
    <location>
        <begin position="1"/>
        <end position="146"/>
    </location>
</feature>
<feature type="domain" description="Globin" evidence="3">
    <location>
        <begin position="2"/>
        <end position="146"/>
    </location>
</feature>
<feature type="binding site" description="distal binding residue">
    <location>
        <position position="63"/>
    </location>
    <ligand>
        <name>heme b</name>
        <dbReference type="ChEBI" id="CHEBI:60344"/>
    </ligand>
    <ligandPart>
        <name>Fe</name>
        <dbReference type="ChEBI" id="CHEBI:18248"/>
    </ligandPart>
</feature>
<feature type="binding site" description="proximal binding residue">
    <location>
        <position position="92"/>
    </location>
    <ligand>
        <name>heme b</name>
        <dbReference type="ChEBI" id="CHEBI:60344"/>
    </ligand>
    <ligandPart>
        <name>Fe</name>
        <dbReference type="ChEBI" id="CHEBI:18248"/>
    </ligandPart>
</feature>
<feature type="modified residue" description="N-acetylvaline" evidence="1">
    <location>
        <position position="1"/>
    </location>
</feature>
<feature type="modified residue" description="Phosphoserine" evidence="2">
    <location>
        <position position="44"/>
    </location>
</feature>
<feature type="modified residue" description="N6-acetyllysine" evidence="2">
    <location>
        <position position="59"/>
    </location>
</feature>
<feature type="modified residue" description="N6-acetyllysine" evidence="2">
    <location>
        <position position="82"/>
    </location>
</feature>
<feature type="modified residue" description="S-nitrosocysteine" evidence="2">
    <location>
        <position position="93"/>
    </location>
</feature>
<feature type="modified residue" description="N6-acetyllysine" evidence="2">
    <location>
        <position position="144"/>
    </location>
</feature>